<dbReference type="EC" id="3.1.3.5" evidence="1"/>
<dbReference type="EMBL" id="CP000267">
    <property type="protein sequence ID" value="ABD70494.1"/>
    <property type="molecule type" value="Genomic_DNA"/>
</dbReference>
<dbReference type="RefSeq" id="WP_011465060.1">
    <property type="nucleotide sequence ID" value="NC_007908.1"/>
</dbReference>
<dbReference type="SMR" id="Q21UQ9"/>
<dbReference type="STRING" id="338969.Rfer_2782"/>
<dbReference type="KEGG" id="rfr:Rfer_2782"/>
<dbReference type="eggNOG" id="COG0496">
    <property type="taxonomic scope" value="Bacteria"/>
</dbReference>
<dbReference type="HOGENOM" id="CLU_045192_1_2_4"/>
<dbReference type="OrthoDB" id="9780815at2"/>
<dbReference type="Proteomes" id="UP000008332">
    <property type="component" value="Chromosome"/>
</dbReference>
<dbReference type="GO" id="GO:0005737">
    <property type="term" value="C:cytoplasm"/>
    <property type="evidence" value="ECO:0007669"/>
    <property type="project" value="UniProtKB-SubCell"/>
</dbReference>
<dbReference type="GO" id="GO:0008254">
    <property type="term" value="F:3'-nucleotidase activity"/>
    <property type="evidence" value="ECO:0007669"/>
    <property type="project" value="TreeGrafter"/>
</dbReference>
<dbReference type="GO" id="GO:0008253">
    <property type="term" value="F:5'-nucleotidase activity"/>
    <property type="evidence" value="ECO:0007669"/>
    <property type="project" value="UniProtKB-UniRule"/>
</dbReference>
<dbReference type="GO" id="GO:0004309">
    <property type="term" value="F:exopolyphosphatase activity"/>
    <property type="evidence" value="ECO:0007669"/>
    <property type="project" value="TreeGrafter"/>
</dbReference>
<dbReference type="GO" id="GO:0046872">
    <property type="term" value="F:metal ion binding"/>
    <property type="evidence" value="ECO:0007669"/>
    <property type="project" value="UniProtKB-UniRule"/>
</dbReference>
<dbReference type="GO" id="GO:0000166">
    <property type="term" value="F:nucleotide binding"/>
    <property type="evidence" value="ECO:0007669"/>
    <property type="project" value="UniProtKB-KW"/>
</dbReference>
<dbReference type="FunFam" id="3.40.1210.10:FF:000001">
    <property type="entry name" value="5'/3'-nucleotidase SurE"/>
    <property type="match status" value="1"/>
</dbReference>
<dbReference type="Gene3D" id="3.40.1210.10">
    <property type="entry name" value="Survival protein SurE-like phosphatase/nucleotidase"/>
    <property type="match status" value="1"/>
</dbReference>
<dbReference type="HAMAP" id="MF_00060">
    <property type="entry name" value="SurE"/>
    <property type="match status" value="1"/>
</dbReference>
<dbReference type="InterPro" id="IPR030048">
    <property type="entry name" value="SurE"/>
</dbReference>
<dbReference type="InterPro" id="IPR002828">
    <property type="entry name" value="SurE-like_Pase/nucleotidase"/>
</dbReference>
<dbReference type="InterPro" id="IPR036523">
    <property type="entry name" value="SurE-like_sf"/>
</dbReference>
<dbReference type="NCBIfam" id="NF001489">
    <property type="entry name" value="PRK00346.1-3"/>
    <property type="match status" value="1"/>
</dbReference>
<dbReference type="NCBIfam" id="NF001490">
    <property type="entry name" value="PRK00346.1-4"/>
    <property type="match status" value="1"/>
</dbReference>
<dbReference type="NCBIfam" id="TIGR00087">
    <property type="entry name" value="surE"/>
    <property type="match status" value="1"/>
</dbReference>
<dbReference type="PANTHER" id="PTHR30457">
    <property type="entry name" value="5'-NUCLEOTIDASE SURE"/>
    <property type="match status" value="1"/>
</dbReference>
<dbReference type="PANTHER" id="PTHR30457:SF12">
    <property type="entry name" value="5'_3'-NUCLEOTIDASE SURE"/>
    <property type="match status" value="1"/>
</dbReference>
<dbReference type="Pfam" id="PF01975">
    <property type="entry name" value="SurE"/>
    <property type="match status" value="1"/>
</dbReference>
<dbReference type="SUPFAM" id="SSF64167">
    <property type="entry name" value="SurE-like"/>
    <property type="match status" value="1"/>
</dbReference>
<accession>Q21UQ9</accession>
<sequence>MKILICNDDGYQAPGLVALYDALKDVAEVEVVAPEQNNSAKSNALTLHTPMYVCRASNGFRYINGTPADCVHIALTGLLGYRPDLVLAGINNGANMGDDTIYSGTVGAAMEGYLFGIPAIAFSQVEKNWSHLASAARKARDLVLQMSQQDLIGSSPWLLNVNIPNLTFDEIAHVKLCRLGRRHAAEAVITQVSPRGDTMYWIGAAGPAKDEAEGTDFHATSLGHIAMTPLKVDLTDHDSLGYWAQTAAKLTLA</sequence>
<proteinExistence type="inferred from homology"/>
<feature type="chain" id="PRO_1000007779" description="5'-nucleotidase SurE">
    <location>
        <begin position="1"/>
        <end position="253"/>
    </location>
</feature>
<feature type="binding site" evidence="1">
    <location>
        <position position="8"/>
    </location>
    <ligand>
        <name>a divalent metal cation</name>
        <dbReference type="ChEBI" id="CHEBI:60240"/>
    </ligand>
</feature>
<feature type="binding site" evidence="1">
    <location>
        <position position="9"/>
    </location>
    <ligand>
        <name>a divalent metal cation</name>
        <dbReference type="ChEBI" id="CHEBI:60240"/>
    </ligand>
</feature>
<feature type="binding site" evidence="1">
    <location>
        <position position="39"/>
    </location>
    <ligand>
        <name>a divalent metal cation</name>
        <dbReference type="ChEBI" id="CHEBI:60240"/>
    </ligand>
</feature>
<feature type="binding site" evidence="1">
    <location>
        <position position="91"/>
    </location>
    <ligand>
        <name>a divalent metal cation</name>
        <dbReference type="ChEBI" id="CHEBI:60240"/>
    </ligand>
</feature>
<evidence type="ECO:0000255" key="1">
    <source>
        <dbReference type="HAMAP-Rule" id="MF_00060"/>
    </source>
</evidence>
<name>SURE_ALBFT</name>
<gene>
    <name evidence="1" type="primary">surE</name>
    <name type="ordered locus">Rfer_2782</name>
</gene>
<reference key="1">
    <citation type="submission" date="2006-02" db="EMBL/GenBank/DDBJ databases">
        <title>Complete sequence of chromosome of Rhodoferax ferrireducens DSM 15236.</title>
        <authorList>
            <person name="Copeland A."/>
            <person name="Lucas S."/>
            <person name="Lapidus A."/>
            <person name="Barry K."/>
            <person name="Detter J.C."/>
            <person name="Glavina del Rio T."/>
            <person name="Hammon N."/>
            <person name="Israni S."/>
            <person name="Pitluck S."/>
            <person name="Brettin T."/>
            <person name="Bruce D."/>
            <person name="Han C."/>
            <person name="Tapia R."/>
            <person name="Gilna P."/>
            <person name="Kiss H."/>
            <person name="Schmutz J."/>
            <person name="Larimer F."/>
            <person name="Land M."/>
            <person name="Kyrpides N."/>
            <person name="Ivanova N."/>
            <person name="Richardson P."/>
        </authorList>
    </citation>
    <scope>NUCLEOTIDE SEQUENCE [LARGE SCALE GENOMIC DNA]</scope>
    <source>
        <strain>ATCC BAA-621 / DSM 15236 / T118</strain>
    </source>
</reference>
<keyword id="KW-0963">Cytoplasm</keyword>
<keyword id="KW-0378">Hydrolase</keyword>
<keyword id="KW-0479">Metal-binding</keyword>
<keyword id="KW-0547">Nucleotide-binding</keyword>
<keyword id="KW-1185">Reference proteome</keyword>
<comment type="function">
    <text evidence="1">Nucleotidase that shows phosphatase activity on nucleoside 5'-monophosphates.</text>
</comment>
<comment type="catalytic activity">
    <reaction evidence="1">
        <text>a ribonucleoside 5'-phosphate + H2O = a ribonucleoside + phosphate</text>
        <dbReference type="Rhea" id="RHEA:12484"/>
        <dbReference type="ChEBI" id="CHEBI:15377"/>
        <dbReference type="ChEBI" id="CHEBI:18254"/>
        <dbReference type="ChEBI" id="CHEBI:43474"/>
        <dbReference type="ChEBI" id="CHEBI:58043"/>
        <dbReference type="EC" id="3.1.3.5"/>
    </reaction>
</comment>
<comment type="cofactor">
    <cofactor evidence="1">
        <name>a divalent metal cation</name>
        <dbReference type="ChEBI" id="CHEBI:60240"/>
    </cofactor>
    <text evidence="1">Binds 1 divalent metal cation per subunit.</text>
</comment>
<comment type="subcellular location">
    <subcellularLocation>
        <location evidence="1">Cytoplasm</location>
    </subcellularLocation>
</comment>
<comment type="similarity">
    <text evidence="1">Belongs to the SurE nucleotidase family.</text>
</comment>
<organism>
    <name type="scientific">Albidiferax ferrireducens (strain ATCC BAA-621 / DSM 15236 / T118)</name>
    <name type="common">Rhodoferax ferrireducens</name>
    <dbReference type="NCBI Taxonomy" id="338969"/>
    <lineage>
        <taxon>Bacteria</taxon>
        <taxon>Pseudomonadati</taxon>
        <taxon>Pseudomonadota</taxon>
        <taxon>Betaproteobacteria</taxon>
        <taxon>Burkholderiales</taxon>
        <taxon>Comamonadaceae</taxon>
        <taxon>Rhodoferax</taxon>
    </lineage>
</organism>
<protein>
    <recommendedName>
        <fullName evidence="1">5'-nucleotidase SurE</fullName>
        <ecNumber evidence="1">3.1.3.5</ecNumber>
    </recommendedName>
    <alternativeName>
        <fullName evidence="1">Nucleoside 5'-monophosphate phosphohydrolase</fullName>
    </alternativeName>
</protein>